<gene>
    <name evidence="1" type="primary">der</name>
    <name type="synonym">engA</name>
    <name type="ordered locus">SFV_2558</name>
</gene>
<organism>
    <name type="scientific">Shigella flexneri serotype 5b (strain 8401)</name>
    <dbReference type="NCBI Taxonomy" id="373384"/>
    <lineage>
        <taxon>Bacteria</taxon>
        <taxon>Pseudomonadati</taxon>
        <taxon>Pseudomonadota</taxon>
        <taxon>Gammaproteobacteria</taxon>
        <taxon>Enterobacterales</taxon>
        <taxon>Enterobacteriaceae</taxon>
        <taxon>Shigella</taxon>
    </lineage>
</organism>
<keyword id="KW-0342">GTP-binding</keyword>
<keyword id="KW-0547">Nucleotide-binding</keyword>
<keyword id="KW-0677">Repeat</keyword>
<keyword id="KW-0690">Ribosome biogenesis</keyword>
<evidence type="ECO:0000255" key="1">
    <source>
        <dbReference type="HAMAP-Rule" id="MF_00195"/>
    </source>
</evidence>
<accession>Q0T208</accession>
<comment type="function">
    <text evidence="1">GTPase that plays an essential role in the late steps of ribosome biogenesis.</text>
</comment>
<comment type="subunit">
    <text evidence="1">Associates with the 50S ribosomal subunit.</text>
</comment>
<comment type="similarity">
    <text evidence="1">Belongs to the TRAFAC class TrmE-Era-EngA-EngB-Septin-like GTPase superfamily. EngA (Der) GTPase family.</text>
</comment>
<dbReference type="EMBL" id="CP000266">
    <property type="protein sequence ID" value="ABF04657.1"/>
    <property type="molecule type" value="Genomic_DNA"/>
</dbReference>
<dbReference type="RefSeq" id="WP_005047281.1">
    <property type="nucleotide sequence ID" value="NC_008258.1"/>
</dbReference>
<dbReference type="SMR" id="Q0T208"/>
<dbReference type="KEGG" id="sfv:SFV_2558"/>
<dbReference type="HOGENOM" id="CLU_016077_6_2_6"/>
<dbReference type="Proteomes" id="UP000000659">
    <property type="component" value="Chromosome"/>
</dbReference>
<dbReference type="GO" id="GO:0005525">
    <property type="term" value="F:GTP binding"/>
    <property type="evidence" value="ECO:0007669"/>
    <property type="project" value="UniProtKB-UniRule"/>
</dbReference>
<dbReference type="GO" id="GO:0043022">
    <property type="term" value="F:ribosome binding"/>
    <property type="evidence" value="ECO:0007669"/>
    <property type="project" value="TreeGrafter"/>
</dbReference>
<dbReference type="GO" id="GO:0042254">
    <property type="term" value="P:ribosome biogenesis"/>
    <property type="evidence" value="ECO:0007669"/>
    <property type="project" value="UniProtKB-KW"/>
</dbReference>
<dbReference type="CDD" id="cd01894">
    <property type="entry name" value="EngA1"/>
    <property type="match status" value="1"/>
</dbReference>
<dbReference type="CDD" id="cd01895">
    <property type="entry name" value="EngA2"/>
    <property type="match status" value="1"/>
</dbReference>
<dbReference type="FunFam" id="3.30.300.20:FF:000004">
    <property type="entry name" value="GTPase Der"/>
    <property type="match status" value="1"/>
</dbReference>
<dbReference type="FunFam" id="3.40.50.300:FF:000040">
    <property type="entry name" value="GTPase Der"/>
    <property type="match status" value="1"/>
</dbReference>
<dbReference type="FunFam" id="3.40.50.300:FF:000057">
    <property type="entry name" value="GTPase Der"/>
    <property type="match status" value="1"/>
</dbReference>
<dbReference type="Gene3D" id="3.30.300.20">
    <property type="match status" value="1"/>
</dbReference>
<dbReference type="Gene3D" id="3.40.50.300">
    <property type="entry name" value="P-loop containing nucleotide triphosphate hydrolases"/>
    <property type="match status" value="2"/>
</dbReference>
<dbReference type="HAMAP" id="MF_00195">
    <property type="entry name" value="GTPase_Der"/>
    <property type="match status" value="1"/>
</dbReference>
<dbReference type="InterPro" id="IPR031166">
    <property type="entry name" value="G_ENGA"/>
</dbReference>
<dbReference type="InterPro" id="IPR006073">
    <property type="entry name" value="GTP-bd"/>
</dbReference>
<dbReference type="InterPro" id="IPR016484">
    <property type="entry name" value="GTPase_Der"/>
</dbReference>
<dbReference type="InterPro" id="IPR032859">
    <property type="entry name" value="KH_dom-like"/>
</dbReference>
<dbReference type="InterPro" id="IPR015946">
    <property type="entry name" value="KH_dom-like_a/b"/>
</dbReference>
<dbReference type="InterPro" id="IPR027417">
    <property type="entry name" value="P-loop_NTPase"/>
</dbReference>
<dbReference type="InterPro" id="IPR005225">
    <property type="entry name" value="Small_GTP-bd"/>
</dbReference>
<dbReference type="NCBIfam" id="TIGR03594">
    <property type="entry name" value="GTPase_EngA"/>
    <property type="match status" value="1"/>
</dbReference>
<dbReference type="NCBIfam" id="TIGR00231">
    <property type="entry name" value="small_GTP"/>
    <property type="match status" value="2"/>
</dbReference>
<dbReference type="PANTHER" id="PTHR43834">
    <property type="entry name" value="GTPASE DER"/>
    <property type="match status" value="1"/>
</dbReference>
<dbReference type="PANTHER" id="PTHR43834:SF6">
    <property type="entry name" value="GTPASE DER"/>
    <property type="match status" value="1"/>
</dbReference>
<dbReference type="Pfam" id="PF14714">
    <property type="entry name" value="KH_dom-like"/>
    <property type="match status" value="1"/>
</dbReference>
<dbReference type="Pfam" id="PF01926">
    <property type="entry name" value="MMR_HSR1"/>
    <property type="match status" value="2"/>
</dbReference>
<dbReference type="PIRSF" id="PIRSF006485">
    <property type="entry name" value="GTP-binding_EngA"/>
    <property type="match status" value="1"/>
</dbReference>
<dbReference type="PRINTS" id="PR00326">
    <property type="entry name" value="GTP1OBG"/>
</dbReference>
<dbReference type="SUPFAM" id="SSF52540">
    <property type="entry name" value="P-loop containing nucleoside triphosphate hydrolases"/>
    <property type="match status" value="2"/>
</dbReference>
<dbReference type="PROSITE" id="PS51712">
    <property type="entry name" value="G_ENGA"/>
    <property type="match status" value="2"/>
</dbReference>
<feature type="chain" id="PRO_1000011742" description="GTPase Der">
    <location>
        <begin position="1"/>
        <end position="490"/>
    </location>
</feature>
<feature type="domain" description="EngA-type G 1">
    <location>
        <begin position="3"/>
        <end position="166"/>
    </location>
</feature>
<feature type="domain" description="EngA-type G 2">
    <location>
        <begin position="203"/>
        <end position="376"/>
    </location>
</feature>
<feature type="domain" description="KH-like" evidence="1">
    <location>
        <begin position="377"/>
        <end position="461"/>
    </location>
</feature>
<feature type="binding site" evidence="1">
    <location>
        <begin position="9"/>
        <end position="16"/>
    </location>
    <ligand>
        <name>GTP</name>
        <dbReference type="ChEBI" id="CHEBI:37565"/>
        <label>1</label>
    </ligand>
</feature>
<feature type="binding site" evidence="1">
    <location>
        <begin position="56"/>
        <end position="60"/>
    </location>
    <ligand>
        <name>GTP</name>
        <dbReference type="ChEBI" id="CHEBI:37565"/>
        <label>1</label>
    </ligand>
</feature>
<feature type="binding site" evidence="1">
    <location>
        <begin position="118"/>
        <end position="121"/>
    </location>
    <ligand>
        <name>GTP</name>
        <dbReference type="ChEBI" id="CHEBI:37565"/>
        <label>1</label>
    </ligand>
</feature>
<feature type="binding site" evidence="1">
    <location>
        <begin position="209"/>
        <end position="216"/>
    </location>
    <ligand>
        <name>GTP</name>
        <dbReference type="ChEBI" id="CHEBI:37565"/>
        <label>2</label>
    </ligand>
</feature>
<feature type="binding site" evidence="1">
    <location>
        <begin position="256"/>
        <end position="260"/>
    </location>
    <ligand>
        <name>GTP</name>
        <dbReference type="ChEBI" id="CHEBI:37565"/>
        <label>2</label>
    </ligand>
</feature>
<feature type="binding site" evidence="1">
    <location>
        <begin position="321"/>
        <end position="324"/>
    </location>
    <ligand>
        <name>GTP</name>
        <dbReference type="ChEBI" id="CHEBI:37565"/>
        <label>2</label>
    </ligand>
</feature>
<protein>
    <recommendedName>
        <fullName evidence="1">GTPase Der</fullName>
    </recommendedName>
    <alternativeName>
        <fullName evidence="1">GTP-binding protein EngA</fullName>
    </alternativeName>
</protein>
<name>DER_SHIF8</name>
<sequence length="490" mass="55064">MVPVVALVGRPNVGKSTLFNRLTRTRDALVADFPGLTRDRKYGRAEIEGREFICIDTGGIDGTEDGVETRMAEQSLLAIEEADVVLFMVDARAGLMPADEAIAKHLRSREKPTFLVVNKTDGLDPDQAVVDFYSLGLGEIYPIAASHGRGVLSLLEHVLLPWMEDLAPQEEVDEDAEYWAQFEAEENGEEEEEDDFDPQSLPIKLAIVGRPNVGKSTLTNRILGEERVVVYDMPGTTRDSIYIPMERDGREYVLIDTAGVRKRGKITDAVEKFSVIKTLQAIEDANVVMLVIDAREGISDQDLSLLGFILNSGRSLVIVVNKWDGLSQEVKEQVKETLDFRLGFIDFARVHFISALHGSGVGNLFESVREAYDSSTRRVGTSMLTRIMTMAVEDHQPPLVRGRRVKLKYAHAGGYNPPIVVIHGNQVKDLPDSYKRYLMNYFRKSLDVMGSPIRIQFKEGENPYANKRNTLTPTQMRKRKRLMKHIKKNK</sequence>
<reference key="1">
    <citation type="journal article" date="2006" name="BMC Genomics">
        <title>Complete genome sequence of Shigella flexneri 5b and comparison with Shigella flexneri 2a.</title>
        <authorList>
            <person name="Nie H."/>
            <person name="Yang F."/>
            <person name="Zhang X."/>
            <person name="Yang J."/>
            <person name="Chen L."/>
            <person name="Wang J."/>
            <person name="Xiong Z."/>
            <person name="Peng J."/>
            <person name="Sun L."/>
            <person name="Dong J."/>
            <person name="Xue Y."/>
            <person name="Xu X."/>
            <person name="Chen S."/>
            <person name="Yao Z."/>
            <person name="Shen Y."/>
            <person name="Jin Q."/>
        </authorList>
    </citation>
    <scope>NUCLEOTIDE SEQUENCE [LARGE SCALE GENOMIC DNA]</scope>
    <source>
        <strain>8401</strain>
    </source>
</reference>
<proteinExistence type="inferred from homology"/>